<geneLocation type="chloroplast"/>
<gene>
    <name type="primary">rps12-A</name>
</gene>
<gene>
    <name type="primary">rps12-B</name>
</gene>
<sequence>MPTIKQLIRNTRQPIRNVTKSPALRGCPQRRGTCTRVYTITPKKPNSALRKVARVRLTSGFEITAYIPGIGHNLQEHSVVLVRGGRVKDLPGVRYHIVRGTLDAVGVKDRQQGRSKYGVKKPK</sequence>
<name>RR12_LOBMA</name>
<feature type="chain" id="PRO_0000296070" description="Small ribosomal subunit protein uS12cz/uS12cy">
    <location>
        <begin position="1"/>
        <end position="123"/>
    </location>
</feature>
<keyword id="KW-0150">Chloroplast</keyword>
<keyword id="KW-0934">Plastid</keyword>
<keyword id="KW-0687">Ribonucleoprotein</keyword>
<keyword id="KW-0689">Ribosomal protein</keyword>
<keyword id="KW-0694">RNA-binding</keyword>
<keyword id="KW-0699">rRNA-binding</keyword>
<dbReference type="EMBL" id="AP009375">
    <property type="protein sequence ID" value="BAF50573.1"/>
    <property type="molecule type" value="Genomic_DNA"/>
</dbReference>
<dbReference type="EMBL" id="AP009375">
    <property type="protein sequence ID" value="BAF50596.1"/>
    <property type="molecule type" value="Genomic_DNA"/>
</dbReference>
<dbReference type="SMR" id="A4QLL8"/>
<dbReference type="GO" id="GO:0009507">
    <property type="term" value="C:chloroplast"/>
    <property type="evidence" value="ECO:0007669"/>
    <property type="project" value="UniProtKB-SubCell"/>
</dbReference>
<dbReference type="GO" id="GO:0015935">
    <property type="term" value="C:small ribosomal subunit"/>
    <property type="evidence" value="ECO:0007669"/>
    <property type="project" value="InterPro"/>
</dbReference>
<dbReference type="GO" id="GO:0019843">
    <property type="term" value="F:rRNA binding"/>
    <property type="evidence" value="ECO:0007669"/>
    <property type="project" value="UniProtKB-UniRule"/>
</dbReference>
<dbReference type="GO" id="GO:0003735">
    <property type="term" value="F:structural constituent of ribosome"/>
    <property type="evidence" value="ECO:0007669"/>
    <property type="project" value="InterPro"/>
</dbReference>
<dbReference type="GO" id="GO:0006412">
    <property type="term" value="P:translation"/>
    <property type="evidence" value="ECO:0007669"/>
    <property type="project" value="UniProtKB-UniRule"/>
</dbReference>
<dbReference type="CDD" id="cd03368">
    <property type="entry name" value="Ribosomal_S12"/>
    <property type="match status" value="1"/>
</dbReference>
<dbReference type="FunFam" id="2.40.50.140:FF:000008">
    <property type="entry name" value="30S ribosomal protein S12, chloroplastic"/>
    <property type="match status" value="1"/>
</dbReference>
<dbReference type="Gene3D" id="2.40.50.140">
    <property type="entry name" value="Nucleic acid-binding proteins"/>
    <property type="match status" value="1"/>
</dbReference>
<dbReference type="HAMAP" id="MF_00403_B">
    <property type="entry name" value="Ribosomal_uS12_B"/>
    <property type="match status" value="1"/>
</dbReference>
<dbReference type="InterPro" id="IPR012340">
    <property type="entry name" value="NA-bd_OB-fold"/>
</dbReference>
<dbReference type="InterPro" id="IPR006032">
    <property type="entry name" value="Ribosomal_uS12"/>
</dbReference>
<dbReference type="InterPro" id="IPR005679">
    <property type="entry name" value="Ribosomal_uS12_bac"/>
</dbReference>
<dbReference type="NCBIfam" id="TIGR00981">
    <property type="entry name" value="rpsL_bact"/>
    <property type="match status" value="1"/>
</dbReference>
<dbReference type="PANTHER" id="PTHR11652">
    <property type="entry name" value="30S RIBOSOMAL PROTEIN S12 FAMILY MEMBER"/>
    <property type="match status" value="1"/>
</dbReference>
<dbReference type="Pfam" id="PF00164">
    <property type="entry name" value="Ribosom_S12_S23"/>
    <property type="match status" value="1"/>
</dbReference>
<dbReference type="PIRSF" id="PIRSF002133">
    <property type="entry name" value="Ribosomal_S12/S23"/>
    <property type="match status" value="1"/>
</dbReference>
<dbReference type="PRINTS" id="PR01034">
    <property type="entry name" value="RIBOSOMALS12"/>
</dbReference>
<dbReference type="SUPFAM" id="SSF50249">
    <property type="entry name" value="Nucleic acid-binding proteins"/>
    <property type="match status" value="1"/>
</dbReference>
<dbReference type="PROSITE" id="PS00055">
    <property type="entry name" value="RIBOSOMAL_S12"/>
    <property type="match status" value="1"/>
</dbReference>
<accession>A4QLL8</accession>
<organism>
    <name type="scientific">Lobularia maritima</name>
    <name type="common">Sweet alyssum</name>
    <name type="synonym">Alyssum maritimum</name>
    <dbReference type="NCBI Taxonomy" id="226051"/>
    <lineage>
        <taxon>Eukaryota</taxon>
        <taxon>Viridiplantae</taxon>
        <taxon>Streptophyta</taxon>
        <taxon>Embryophyta</taxon>
        <taxon>Tracheophyta</taxon>
        <taxon>Spermatophyta</taxon>
        <taxon>Magnoliopsida</taxon>
        <taxon>eudicotyledons</taxon>
        <taxon>Gunneridae</taxon>
        <taxon>Pentapetalae</taxon>
        <taxon>rosids</taxon>
        <taxon>malvids</taxon>
        <taxon>Brassicales</taxon>
        <taxon>Brassicaceae</taxon>
        <taxon>Anastaticeae</taxon>
        <taxon>Lobularia</taxon>
    </lineage>
</organism>
<reference key="1">
    <citation type="submission" date="2007-03" db="EMBL/GenBank/DDBJ databases">
        <title>Sequencing analysis of Lobularia maritima chloroplast DNA.</title>
        <authorList>
            <person name="Hosouchi T."/>
            <person name="Tsuruoka H."/>
            <person name="Kotani H."/>
        </authorList>
    </citation>
    <scope>NUCLEOTIDE SEQUENCE [LARGE SCALE GENOMIC DNA]</scope>
</reference>
<comment type="function">
    <text evidence="1">With S4 and S5 plays an important role in translational accuracy. Located at the interface of the 30S and 50S subunits (By similarity).</text>
</comment>
<comment type="subunit">
    <text evidence="1">Part of the 30S ribosomal subunit.</text>
</comment>
<comment type="subcellular location">
    <subcellularLocation>
        <location>Plastid</location>
        <location>Chloroplast</location>
    </subcellularLocation>
</comment>
<comment type="similarity">
    <text evidence="3">Belongs to the universal ribosomal protein uS12 family.</text>
</comment>
<proteinExistence type="inferred from homology"/>
<protein>
    <recommendedName>
        <fullName evidence="2">Small ribosomal subunit protein uS12cz/uS12cy</fullName>
    </recommendedName>
    <alternativeName>
        <fullName evidence="3">30S ribosomal protein S12, chloroplastic</fullName>
    </alternativeName>
</protein>
<evidence type="ECO:0000250" key="1"/>
<evidence type="ECO:0000255" key="2">
    <source>
        <dbReference type="HAMAP-Rule" id="MF_00403"/>
    </source>
</evidence>
<evidence type="ECO:0000305" key="3"/>